<comment type="function">
    <text evidence="1">Role in growth on acetoin or butanediol. Involved in the breakdown of these compounds used as a carbon source (By similarity).</text>
</comment>
<comment type="pathway">
    <text>Ketone degradation; acetoin degradation.</text>
</comment>
<comment type="similarity">
    <text evidence="2">Belongs to the histone deacetylase family.</text>
</comment>
<protein>
    <recommendedName>
        <fullName>Acetoin utilization protein AcuC</fullName>
    </recommendedName>
</protein>
<sequence>MQQHSSKTAYVYSDKLLQYRFHDQHPFNQMRLKLTTELLLNANLLSPEQIVQPRIATGDELMLIHKYDYVEAIKHASHGIISEDEAKKYGLNDEENGQFKHMHRHSATIVGGALTLADLIMSGKVLNGCHLGGGLHHAQPGRASGFCIYNDIAITAQYIAKEYNQRVLIIDTDAHHGDGTQWSFYADNHVTTYSIHETGKFLFPGSGHYTERGEDIGYGHTVNVPLEPYTEDASFLECFKLTVEPVVKSFKPDIILSVNGVDIHYRDPLTHLNCTLHSLYEIPYFVKYLADSYTNGKVIMFGGGGYNIWRVVPRAWSHVFLSLIDQPIQSGYLPLEWINKWKHYSSELLPKRWEDRLNDYTYVPRTKEISEKNKKLALHIASWYESTRQ</sequence>
<gene>
    <name type="primary">acuC</name>
    <name type="ordered locus">SA1556</name>
</gene>
<accession>P64376</accession>
<accession>Q99TC9</accession>
<name>ACUC_STAAN</name>
<keyword id="KW-0006">Acetoin catabolism</keyword>
<organism>
    <name type="scientific">Staphylococcus aureus (strain N315)</name>
    <dbReference type="NCBI Taxonomy" id="158879"/>
    <lineage>
        <taxon>Bacteria</taxon>
        <taxon>Bacillati</taxon>
        <taxon>Bacillota</taxon>
        <taxon>Bacilli</taxon>
        <taxon>Bacillales</taxon>
        <taxon>Staphylococcaceae</taxon>
        <taxon>Staphylococcus</taxon>
    </lineage>
</organism>
<proteinExistence type="evidence at protein level"/>
<feature type="chain" id="PRO_0000114732" description="Acetoin utilization protein AcuC">
    <location>
        <begin position="1"/>
        <end position="389"/>
    </location>
</feature>
<reference key="1">
    <citation type="journal article" date="2001" name="Lancet">
        <title>Whole genome sequencing of meticillin-resistant Staphylococcus aureus.</title>
        <authorList>
            <person name="Kuroda M."/>
            <person name="Ohta T."/>
            <person name="Uchiyama I."/>
            <person name="Baba T."/>
            <person name="Yuzawa H."/>
            <person name="Kobayashi I."/>
            <person name="Cui L."/>
            <person name="Oguchi A."/>
            <person name="Aoki K."/>
            <person name="Nagai Y."/>
            <person name="Lian J.-Q."/>
            <person name="Ito T."/>
            <person name="Kanamori M."/>
            <person name="Matsumaru H."/>
            <person name="Maruyama A."/>
            <person name="Murakami H."/>
            <person name="Hosoyama A."/>
            <person name="Mizutani-Ui Y."/>
            <person name="Takahashi N.K."/>
            <person name="Sawano T."/>
            <person name="Inoue R."/>
            <person name="Kaito C."/>
            <person name="Sekimizu K."/>
            <person name="Hirakawa H."/>
            <person name="Kuhara S."/>
            <person name="Goto S."/>
            <person name="Yabuzaki J."/>
            <person name="Kanehisa M."/>
            <person name="Yamashita A."/>
            <person name="Oshima K."/>
            <person name="Furuya K."/>
            <person name="Yoshino C."/>
            <person name="Shiba T."/>
            <person name="Hattori M."/>
            <person name="Ogasawara N."/>
            <person name="Hayashi H."/>
            <person name="Hiramatsu K."/>
        </authorList>
    </citation>
    <scope>NUCLEOTIDE SEQUENCE [LARGE SCALE GENOMIC DNA]</scope>
    <source>
        <strain>N315</strain>
    </source>
</reference>
<reference key="2">
    <citation type="submission" date="2007-10" db="UniProtKB">
        <title>Shotgun proteomic analysis of total and membrane protein extracts of S. aureus strain N315.</title>
        <authorList>
            <person name="Vaezzadeh A.R."/>
            <person name="Deshusses J."/>
            <person name="Lescuyer P."/>
            <person name="Hochstrasser D.F."/>
        </authorList>
    </citation>
    <scope>IDENTIFICATION BY MASS SPECTROMETRY [LARGE SCALE ANALYSIS]</scope>
    <source>
        <strain>N315</strain>
    </source>
</reference>
<evidence type="ECO:0000250" key="1"/>
<evidence type="ECO:0000305" key="2"/>
<dbReference type="EMBL" id="BA000018">
    <property type="protein sequence ID" value="BAB42824.1"/>
    <property type="molecule type" value="Genomic_DNA"/>
</dbReference>
<dbReference type="PIR" id="C89958">
    <property type="entry name" value="C89958"/>
</dbReference>
<dbReference type="RefSeq" id="WP_001184011.1">
    <property type="nucleotide sequence ID" value="NC_002745.2"/>
</dbReference>
<dbReference type="SMR" id="P64376"/>
<dbReference type="DNASU" id="1124402"/>
<dbReference type="EnsemblBacteria" id="BAB42824">
    <property type="protein sequence ID" value="BAB42824"/>
    <property type="gene ID" value="BAB42824"/>
</dbReference>
<dbReference type="KEGG" id="sau:SA1556"/>
<dbReference type="HOGENOM" id="CLU_007727_8_0_9"/>
<dbReference type="UniPathway" id="UPA00040"/>
<dbReference type="GO" id="GO:0004407">
    <property type="term" value="F:histone deacetylase activity"/>
    <property type="evidence" value="ECO:0007669"/>
    <property type="project" value="TreeGrafter"/>
</dbReference>
<dbReference type="GO" id="GO:0045150">
    <property type="term" value="P:acetoin catabolic process"/>
    <property type="evidence" value="ECO:0007669"/>
    <property type="project" value="UniProtKB-UniPathway"/>
</dbReference>
<dbReference type="GO" id="GO:0040029">
    <property type="term" value="P:epigenetic regulation of gene expression"/>
    <property type="evidence" value="ECO:0007669"/>
    <property type="project" value="TreeGrafter"/>
</dbReference>
<dbReference type="CDD" id="cd09994">
    <property type="entry name" value="HDAC_AcuC_like"/>
    <property type="match status" value="1"/>
</dbReference>
<dbReference type="Gene3D" id="3.40.800.20">
    <property type="entry name" value="Histone deacetylase domain"/>
    <property type="match status" value="1"/>
</dbReference>
<dbReference type="InterPro" id="IPR003085">
    <property type="entry name" value="AcuC"/>
</dbReference>
<dbReference type="InterPro" id="IPR050284">
    <property type="entry name" value="HDAC_PDAC"/>
</dbReference>
<dbReference type="InterPro" id="IPR000286">
    <property type="entry name" value="His_deacetylse"/>
</dbReference>
<dbReference type="InterPro" id="IPR023801">
    <property type="entry name" value="His_deacetylse_dom"/>
</dbReference>
<dbReference type="InterPro" id="IPR037138">
    <property type="entry name" value="His_deacetylse_dom_sf"/>
</dbReference>
<dbReference type="InterPro" id="IPR023696">
    <property type="entry name" value="Ureohydrolase_dom_sf"/>
</dbReference>
<dbReference type="PANTHER" id="PTHR10625:SF10">
    <property type="entry name" value="HISTONE DEACETYLASE HDAC1"/>
    <property type="match status" value="1"/>
</dbReference>
<dbReference type="PANTHER" id="PTHR10625">
    <property type="entry name" value="HISTONE DEACETYLASE HDAC1-RELATED"/>
    <property type="match status" value="1"/>
</dbReference>
<dbReference type="Pfam" id="PF00850">
    <property type="entry name" value="Hist_deacetyl"/>
    <property type="match status" value="1"/>
</dbReference>
<dbReference type="PRINTS" id="PR01272">
    <property type="entry name" value="ACUCPROTEIN"/>
</dbReference>
<dbReference type="PRINTS" id="PR01270">
    <property type="entry name" value="HDASUPER"/>
</dbReference>
<dbReference type="SUPFAM" id="SSF52768">
    <property type="entry name" value="Arginase/deacetylase"/>
    <property type="match status" value="1"/>
</dbReference>